<evidence type="ECO:0000269" key="1">
    <source>
    </source>
</evidence>
<evidence type="ECO:0000305" key="2"/>
<evidence type="ECO:0007829" key="3">
    <source>
        <dbReference type="PDB" id="1MMO"/>
    </source>
</evidence>
<evidence type="ECO:0007829" key="4">
    <source>
        <dbReference type="PDB" id="1MTY"/>
    </source>
</evidence>
<evidence type="ECO:0007829" key="5">
    <source>
        <dbReference type="PDB" id="1XMH"/>
    </source>
</evidence>
<comment type="function">
    <text>Responsible for the initial oxygenation of methane to methanol in methanotrophs. It also catalyzes the monohydroxylation of a variety of unactivated alkenes, alicyclic, aromatic and heterocyclic compounds.</text>
</comment>
<comment type="catalytic activity">
    <reaction>
        <text>methane + NADH + O2 + H(+) = methanol + NAD(+) + H2O</text>
        <dbReference type="Rhea" id="RHEA:13637"/>
        <dbReference type="ChEBI" id="CHEBI:15377"/>
        <dbReference type="ChEBI" id="CHEBI:15378"/>
        <dbReference type="ChEBI" id="CHEBI:15379"/>
        <dbReference type="ChEBI" id="CHEBI:16183"/>
        <dbReference type="ChEBI" id="CHEBI:17790"/>
        <dbReference type="ChEBI" id="CHEBI:57540"/>
        <dbReference type="ChEBI" id="CHEBI:57945"/>
        <dbReference type="EC" id="1.14.13.25"/>
    </reaction>
</comment>
<comment type="catalytic activity">
    <reaction>
        <text>methane + NADPH + O2 + H(+) = methanol + NADP(+) + H2O</text>
        <dbReference type="Rhea" id="RHEA:13641"/>
        <dbReference type="ChEBI" id="CHEBI:15377"/>
        <dbReference type="ChEBI" id="CHEBI:15378"/>
        <dbReference type="ChEBI" id="CHEBI:15379"/>
        <dbReference type="ChEBI" id="CHEBI:16183"/>
        <dbReference type="ChEBI" id="CHEBI:17790"/>
        <dbReference type="ChEBI" id="CHEBI:57783"/>
        <dbReference type="ChEBI" id="CHEBI:58349"/>
        <dbReference type="EC" id="1.14.13.25"/>
    </reaction>
</comment>
<comment type="subunit">
    <text>M.capsulatus has two forms of methane monooxygenase, a soluble and a membrane-bound type. The soluble type consists of four components (A to D): protein A, comprising three chains, in an alpha-2, beta-2, gamma-2 configuration, is a nonheme iron protein containing an unusual mu-hydroxo bridge structure at its active site and interacts with both oxygen and methane.</text>
</comment>
<comment type="interaction">
    <interactant intactId="EBI-9023802">
        <id>P18798</id>
    </interactant>
    <interactant intactId="EBI-9023796">
        <id>P22869</id>
        <label>mmoX</label>
    </interactant>
    <organismsDiffer>false</organismsDiffer>
    <experiments>5</experiments>
</comment>
<dbReference type="EC" id="1.14.13.25"/>
<dbReference type="EMBL" id="M90050">
    <property type="protein sequence ID" value="AAB62393.2"/>
    <property type="molecule type" value="Genomic_DNA"/>
</dbReference>
<dbReference type="EMBL" id="AE017282">
    <property type="protein sequence ID" value="AAU92727.1"/>
    <property type="molecule type" value="Genomic_DNA"/>
</dbReference>
<dbReference type="PIR" id="A61412">
    <property type="entry name" value="A61412"/>
</dbReference>
<dbReference type="PIR" id="JL0101">
    <property type="entry name" value="JL0101"/>
</dbReference>
<dbReference type="RefSeq" id="WP_010960483.1">
    <property type="nucleotide sequence ID" value="NC_002977.6"/>
</dbReference>
<dbReference type="PDB" id="1FYZ">
    <property type="method" value="X-ray"/>
    <property type="resolution" value="2.15 A"/>
    <property type="chains" value="C/D=1-389"/>
</dbReference>
<dbReference type="PDB" id="1FZ0">
    <property type="method" value="X-ray"/>
    <property type="resolution" value="2.07 A"/>
    <property type="chains" value="C/D=1-389"/>
</dbReference>
<dbReference type="PDB" id="1FZ1">
    <property type="method" value="X-ray"/>
    <property type="resolution" value="1.96 A"/>
    <property type="chains" value="C/D=1-389"/>
</dbReference>
<dbReference type="PDB" id="1FZ2">
    <property type="method" value="X-ray"/>
    <property type="resolution" value="2.15 A"/>
    <property type="chains" value="C/D=1-389"/>
</dbReference>
<dbReference type="PDB" id="1FZ3">
    <property type="method" value="X-ray"/>
    <property type="resolution" value="2.03 A"/>
    <property type="chains" value="C/D=1-389"/>
</dbReference>
<dbReference type="PDB" id="1FZ4">
    <property type="method" value="X-ray"/>
    <property type="resolution" value="2.38 A"/>
    <property type="chains" value="C/D=1-389"/>
</dbReference>
<dbReference type="PDB" id="1FZ5">
    <property type="method" value="X-ray"/>
    <property type="resolution" value="2.40 A"/>
    <property type="chains" value="C/D=1-389"/>
</dbReference>
<dbReference type="PDB" id="1FZ6">
    <property type="method" value="X-ray"/>
    <property type="resolution" value="2.05 A"/>
    <property type="chains" value="C/D=1-389"/>
</dbReference>
<dbReference type="PDB" id="1FZ7">
    <property type="method" value="X-ray"/>
    <property type="resolution" value="1.96 A"/>
    <property type="chains" value="C/D=1-389"/>
</dbReference>
<dbReference type="PDB" id="1FZ8">
    <property type="method" value="X-ray"/>
    <property type="resolution" value="2.10 A"/>
    <property type="chains" value="C/D=1-389"/>
</dbReference>
<dbReference type="PDB" id="1FZ9">
    <property type="method" value="X-ray"/>
    <property type="resolution" value="2.30 A"/>
    <property type="chains" value="C/D=1-389"/>
</dbReference>
<dbReference type="PDB" id="1FZH">
    <property type="method" value="X-ray"/>
    <property type="resolution" value="2.60 A"/>
    <property type="chains" value="C/D=1-389"/>
</dbReference>
<dbReference type="PDB" id="1FZI">
    <property type="method" value="X-ray"/>
    <property type="resolution" value="3.30 A"/>
    <property type="chains" value="C/D=1-389"/>
</dbReference>
<dbReference type="PDB" id="1MMO">
    <property type="method" value="X-ray"/>
    <property type="resolution" value="2.20 A"/>
    <property type="chains" value="B/C=6-389"/>
</dbReference>
<dbReference type="PDB" id="1MTY">
    <property type="method" value="X-ray"/>
    <property type="resolution" value="1.70 A"/>
    <property type="chains" value="B/C=6-362"/>
</dbReference>
<dbReference type="PDB" id="1XMF">
    <property type="method" value="X-ray"/>
    <property type="resolution" value="2.32 A"/>
    <property type="chains" value="C/D=2-389"/>
</dbReference>
<dbReference type="PDB" id="1XMG">
    <property type="method" value="X-ray"/>
    <property type="resolution" value="2.10 A"/>
    <property type="chains" value="C/D=2-389"/>
</dbReference>
<dbReference type="PDB" id="1XMH">
    <property type="method" value="X-ray"/>
    <property type="resolution" value="2.32 A"/>
    <property type="chains" value="C/D=2-389"/>
</dbReference>
<dbReference type="PDB" id="1XU3">
    <property type="method" value="X-ray"/>
    <property type="resolution" value="2.30 A"/>
    <property type="chains" value="C/D=1-389"/>
</dbReference>
<dbReference type="PDB" id="1XU5">
    <property type="method" value="X-ray"/>
    <property type="resolution" value="1.96 A"/>
    <property type="chains" value="C/D=1-389"/>
</dbReference>
<dbReference type="PDB" id="1XVB">
    <property type="method" value="X-ray"/>
    <property type="resolution" value="1.80 A"/>
    <property type="chains" value="C/D=1-389"/>
</dbReference>
<dbReference type="PDB" id="1XVC">
    <property type="method" value="X-ray"/>
    <property type="resolution" value="2.00 A"/>
    <property type="chains" value="C/D=1-389"/>
</dbReference>
<dbReference type="PDB" id="1XVD">
    <property type="method" value="X-ray"/>
    <property type="resolution" value="2.30 A"/>
    <property type="chains" value="C/D=1-389"/>
</dbReference>
<dbReference type="PDB" id="1XVE">
    <property type="method" value="X-ray"/>
    <property type="resolution" value="2.40 A"/>
    <property type="chains" value="C/D=1-389"/>
</dbReference>
<dbReference type="PDB" id="1XVF">
    <property type="method" value="X-ray"/>
    <property type="resolution" value="2.00 A"/>
    <property type="chains" value="C/D=1-389"/>
</dbReference>
<dbReference type="PDB" id="1XVG">
    <property type="method" value="X-ray"/>
    <property type="resolution" value="1.96 A"/>
    <property type="chains" value="C/D=1-389"/>
</dbReference>
<dbReference type="PDB" id="4GAM">
    <property type="method" value="X-ray"/>
    <property type="resolution" value="2.90 A"/>
    <property type="chains" value="B/G/L/Q=1-389"/>
</dbReference>
<dbReference type="PDB" id="7TC7">
    <property type="method" value="EM"/>
    <property type="resolution" value="2.90 A"/>
    <property type="chains" value="B/C=1-389"/>
</dbReference>
<dbReference type="PDB" id="7TC8">
    <property type="method" value="EM"/>
    <property type="resolution" value="2.40 A"/>
    <property type="chains" value="B/C=1-389"/>
</dbReference>
<dbReference type="PDBsum" id="1FYZ"/>
<dbReference type="PDBsum" id="1FZ0"/>
<dbReference type="PDBsum" id="1FZ1"/>
<dbReference type="PDBsum" id="1FZ2"/>
<dbReference type="PDBsum" id="1FZ3"/>
<dbReference type="PDBsum" id="1FZ4"/>
<dbReference type="PDBsum" id="1FZ5"/>
<dbReference type="PDBsum" id="1FZ6"/>
<dbReference type="PDBsum" id="1FZ7"/>
<dbReference type="PDBsum" id="1FZ8"/>
<dbReference type="PDBsum" id="1FZ9"/>
<dbReference type="PDBsum" id="1FZH"/>
<dbReference type="PDBsum" id="1FZI"/>
<dbReference type="PDBsum" id="1MMO"/>
<dbReference type="PDBsum" id="1MTY"/>
<dbReference type="PDBsum" id="1XMF"/>
<dbReference type="PDBsum" id="1XMG"/>
<dbReference type="PDBsum" id="1XMH"/>
<dbReference type="PDBsum" id="1XU3"/>
<dbReference type="PDBsum" id="1XU5"/>
<dbReference type="PDBsum" id="1XVB"/>
<dbReference type="PDBsum" id="1XVC"/>
<dbReference type="PDBsum" id="1XVD"/>
<dbReference type="PDBsum" id="1XVE"/>
<dbReference type="PDBsum" id="1XVF"/>
<dbReference type="PDBsum" id="1XVG"/>
<dbReference type="PDBsum" id="4GAM"/>
<dbReference type="PDBsum" id="7TC7"/>
<dbReference type="PDBsum" id="7TC8"/>
<dbReference type="BMRB" id="P18798"/>
<dbReference type="EMDB" id="EMD-25804"/>
<dbReference type="EMDB" id="EMD-25805"/>
<dbReference type="SMR" id="P18798"/>
<dbReference type="DIP" id="DIP-59862N"/>
<dbReference type="IntAct" id="P18798">
    <property type="interactions" value="1"/>
</dbReference>
<dbReference type="STRING" id="243233.MCA1195"/>
<dbReference type="GeneID" id="88223482"/>
<dbReference type="KEGG" id="mca:MCA1195"/>
<dbReference type="eggNOG" id="ENOG502Z7Z9">
    <property type="taxonomic scope" value="Bacteria"/>
</dbReference>
<dbReference type="HOGENOM" id="CLU_690417_0_0_6"/>
<dbReference type="BioCyc" id="MetaCyc:MONOMER-3862"/>
<dbReference type="BRENDA" id="1.14.13.25">
    <property type="organism ID" value="3305"/>
</dbReference>
<dbReference type="EvolutionaryTrace" id="P18798"/>
<dbReference type="Proteomes" id="UP000006821">
    <property type="component" value="Chromosome"/>
</dbReference>
<dbReference type="GO" id="GO:0015049">
    <property type="term" value="F:methane monooxygenase [NAD(P)H] activity"/>
    <property type="evidence" value="ECO:0007669"/>
    <property type="project" value="UniProtKB-EC"/>
</dbReference>
<dbReference type="GO" id="GO:0006730">
    <property type="term" value="P:one-carbon metabolic process"/>
    <property type="evidence" value="ECO:0007669"/>
    <property type="project" value="UniProtKB-KW"/>
</dbReference>
<dbReference type="CDD" id="cd01058">
    <property type="entry name" value="AAMH_B"/>
    <property type="match status" value="1"/>
</dbReference>
<dbReference type="Gene3D" id="1.10.620.20">
    <property type="entry name" value="Ribonucleotide Reductase, subunit A"/>
    <property type="match status" value="1"/>
</dbReference>
<dbReference type="InterPro" id="IPR009078">
    <property type="entry name" value="Ferritin-like_SF"/>
</dbReference>
<dbReference type="InterPro" id="IPR054956">
    <property type="entry name" value="MethMoxA_beta"/>
</dbReference>
<dbReference type="InterPro" id="IPR012078">
    <property type="entry name" value="MP_mOase_hydro"/>
</dbReference>
<dbReference type="InterPro" id="IPR003430">
    <property type="entry name" value="Phenol_Hydrox"/>
</dbReference>
<dbReference type="InterPro" id="IPR012348">
    <property type="entry name" value="RNR-like"/>
</dbReference>
<dbReference type="NCBIfam" id="NF045802">
    <property type="entry name" value="MethMoxAlphaMmoY"/>
    <property type="match status" value="1"/>
</dbReference>
<dbReference type="Pfam" id="PF02332">
    <property type="entry name" value="Phenol_Hydrox"/>
    <property type="match status" value="1"/>
</dbReference>
<dbReference type="PIRSF" id="PIRSF000040">
    <property type="entry name" value="MMOH_comp"/>
    <property type="match status" value="1"/>
</dbReference>
<dbReference type="SUPFAM" id="SSF47240">
    <property type="entry name" value="Ferritin-like"/>
    <property type="match status" value="1"/>
</dbReference>
<organism>
    <name type="scientific">Methylococcus capsulatus (strain ATCC 33009 / NCIMB 11132 / Bath)</name>
    <dbReference type="NCBI Taxonomy" id="243233"/>
    <lineage>
        <taxon>Bacteria</taxon>
        <taxon>Pseudomonadati</taxon>
        <taxon>Pseudomonadota</taxon>
        <taxon>Gammaproteobacteria</taxon>
        <taxon>Methylococcales</taxon>
        <taxon>Methylococcaceae</taxon>
        <taxon>Methylococcus</taxon>
    </lineage>
</organism>
<proteinExistence type="evidence at protein level"/>
<protein>
    <recommendedName>
        <fullName>Methane monooxygenase component A beta chain</fullName>
        <ecNumber>1.14.13.25</ecNumber>
    </recommendedName>
    <alternativeName>
        <fullName>Methane hydroxylase</fullName>
    </alternativeName>
</protein>
<sequence length="389" mass="45133">MSMLGERRRGLTDPEMAAVILKALPEAPLDGNNKMGYFVTPRWKRLTEYEALTVYAQPNADWIAGGLDWGDWTQKFHGGRPSWGNETTELRTVDWFKHRDPLRRWHAPYVKDKAEEWRYTDRFLQGYSADGQIRAMNPTWRDEFINRYWGAFLFNEYGLFNAHSQGAREALSDVTRVSLAFWGFDKIDIAQMIQLERGFLAKIVPGFDESTAVPKAEWTNGEVYKSARLAVEGLWQEVFDWNESAFSVHAVYDALFGQFVRREFFQRLAPRFGDNLTPFFINQAQTYFQIAKQGVQDLYYNCLGDDPEFSDYNRTVMRNWTGKWLEPTIAALRDFMGLFAKLPAGTTDKEEITASLYRVVDDWIEDYASRIDFKADRDQIVKAVLAGLK</sequence>
<gene>
    <name type="primary">mmoY</name>
    <name type="ordered locus">MCA1195</name>
</gene>
<feature type="initiator methionine" description="Removed" evidence="1">
    <location>
        <position position="1"/>
    </location>
</feature>
<feature type="chain" id="PRO_0000096407" description="Methane monooxygenase component A beta chain">
    <location>
        <begin position="2"/>
        <end position="389"/>
    </location>
</feature>
<feature type="sequence conflict" description="In Ref. 1; AAB62393." evidence="2" ref="1">
    <original>R</original>
    <variation>A</variation>
    <location>
        <position position="370"/>
    </location>
</feature>
<feature type="turn" evidence="4">
    <location>
        <begin position="10"/>
        <end position="12"/>
    </location>
</feature>
<feature type="helix" evidence="4">
    <location>
        <begin position="14"/>
        <end position="23"/>
    </location>
</feature>
<feature type="turn" evidence="4">
    <location>
        <begin position="35"/>
        <end position="38"/>
    </location>
</feature>
<feature type="strand" evidence="4">
    <location>
        <begin position="42"/>
        <end position="45"/>
    </location>
</feature>
<feature type="helix" evidence="4">
    <location>
        <begin position="48"/>
        <end position="53"/>
    </location>
</feature>
<feature type="helix" evidence="4">
    <location>
        <begin position="85"/>
        <end position="87"/>
    </location>
</feature>
<feature type="helix" evidence="5">
    <location>
        <begin position="95"/>
        <end position="97"/>
    </location>
</feature>
<feature type="helix" evidence="4">
    <location>
        <begin position="106"/>
        <end position="129"/>
    </location>
</feature>
<feature type="helix" evidence="4">
    <location>
        <begin position="132"/>
        <end position="135"/>
    </location>
</feature>
<feature type="helix" evidence="4">
    <location>
        <begin position="138"/>
        <end position="142"/>
    </location>
</feature>
<feature type="helix" evidence="4">
    <location>
        <begin position="143"/>
        <end position="147"/>
    </location>
</feature>
<feature type="helix" evidence="4">
    <location>
        <begin position="148"/>
        <end position="161"/>
    </location>
</feature>
<feature type="helix" evidence="4">
    <location>
        <begin position="164"/>
        <end position="169"/>
    </location>
</feature>
<feature type="helix" evidence="4">
    <location>
        <begin position="173"/>
        <end position="203"/>
    </location>
</feature>
<feature type="helix" evidence="4">
    <location>
        <begin position="212"/>
        <end position="220"/>
    </location>
</feature>
<feature type="strand" evidence="3">
    <location>
        <begin position="222"/>
        <end position="224"/>
    </location>
</feature>
<feature type="helix" evidence="4">
    <location>
        <begin position="225"/>
        <end position="236"/>
    </location>
</feature>
<feature type="helix" evidence="4">
    <location>
        <begin position="241"/>
        <end position="250"/>
    </location>
</feature>
<feature type="helix" evidence="4">
    <location>
        <begin position="252"/>
        <end position="262"/>
    </location>
</feature>
<feature type="helix" evidence="4">
    <location>
        <begin position="265"/>
        <end position="268"/>
    </location>
</feature>
<feature type="helix" evidence="4">
    <location>
        <begin position="269"/>
        <end position="272"/>
    </location>
</feature>
<feature type="helix" evidence="4">
    <location>
        <begin position="276"/>
        <end position="299"/>
    </location>
</feature>
<feature type="helix" evidence="4">
    <location>
        <begin position="300"/>
        <end position="304"/>
    </location>
</feature>
<feature type="turn" evidence="4">
    <location>
        <begin position="307"/>
        <end position="309"/>
    </location>
</feature>
<feature type="helix" evidence="4">
    <location>
        <begin position="310"/>
        <end position="335"/>
    </location>
</feature>
<feature type="helix" evidence="4">
    <location>
        <begin position="336"/>
        <end position="341"/>
    </location>
</feature>
<feature type="helix" evidence="4">
    <location>
        <begin position="349"/>
        <end position="366"/>
    </location>
</feature>
<feature type="helix" evidence="4">
    <location>
        <begin position="368"/>
        <end position="371"/>
    </location>
</feature>
<feature type="helix" evidence="4">
    <location>
        <begin position="377"/>
        <end position="385"/>
    </location>
</feature>
<feature type="turn" evidence="4">
    <location>
        <begin position="386"/>
        <end position="388"/>
    </location>
</feature>
<reference key="1">
    <citation type="journal article" date="1989" name="Arch. Microbiol.">
        <title>Molecular analysis of methane monooxygenase from Methylococcus capsulatus (Bath).</title>
        <authorList>
            <person name="Stainthorpe A.C."/>
            <person name="Murrell J.C."/>
            <person name="Salmond G.P.C."/>
            <person name="Dalton H."/>
            <person name="Lees V."/>
        </authorList>
    </citation>
    <scope>NUCLEOTIDE SEQUENCE [GENOMIC DNA]</scope>
    <scope>PROTEIN SEQUENCE OF 2-41</scope>
    <source>
        <strain>ATCC 33009 / NCIMB 11132 / Bath</strain>
    </source>
</reference>
<reference key="2">
    <citation type="submission" date="1999-10" db="EMBL/GenBank/DDBJ databases">
        <authorList>
            <person name="McDonald I."/>
            <person name="Murrell J.C."/>
        </authorList>
    </citation>
    <scope>SEQUENCE REVISION TO 142-145 AND C-TERMINUS</scope>
</reference>
<reference key="3">
    <citation type="journal article" date="2004" name="PLoS Biol.">
        <title>Genomic insights into methanotrophy: the complete genome sequence of Methylococcus capsulatus (Bath).</title>
        <authorList>
            <person name="Ward N.L."/>
            <person name="Larsen O."/>
            <person name="Sakwa J."/>
            <person name="Bruseth L."/>
            <person name="Khouri H.M."/>
            <person name="Durkin A.S."/>
            <person name="Dimitrov G."/>
            <person name="Jiang L."/>
            <person name="Scanlan D."/>
            <person name="Kang K.H."/>
            <person name="Lewis M.R."/>
            <person name="Nelson K.E."/>
            <person name="Methe B.A."/>
            <person name="Wu M."/>
            <person name="Heidelberg J.F."/>
            <person name="Paulsen I.T."/>
            <person name="Fouts D.E."/>
            <person name="Ravel J."/>
            <person name="Tettelin H."/>
            <person name="Ren Q."/>
            <person name="Read T.D."/>
            <person name="DeBoy R.T."/>
            <person name="Seshadri R."/>
            <person name="Salzberg S.L."/>
            <person name="Jensen H.B."/>
            <person name="Birkeland N.K."/>
            <person name="Nelson W.C."/>
            <person name="Dodson R.J."/>
            <person name="Grindhaug S.H."/>
            <person name="Holt I.E."/>
            <person name="Eidhammer I."/>
            <person name="Jonasen I."/>
            <person name="Vanaken S."/>
            <person name="Utterback T.R."/>
            <person name="Feldblyum T.V."/>
            <person name="Fraser C.M."/>
            <person name="Lillehaug J.R."/>
            <person name="Eisen J.A."/>
        </authorList>
    </citation>
    <scope>NUCLEOTIDE SEQUENCE [LARGE SCALE GENOMIC DNA]</scope>
    <source>
        <strain>ATCC 33009 / NCIMB 11132 / Bath</strain>
    </source>
</reference>
<reference key="4">
    <citation type="journal article" date="1993" name="Nature">
        <title>Crystal structure of a bacterial non-haem iron hydroxylase that catalyses the biological oxidation of methane.</title>
        <authorList>
            <person name="Rosenzweig A.C."/>
            <person name="Frederick C.A."/>
            <person name="Lippard S.J."/>
            <person name="Nordlund P."/>
        </authorList>
    </citation>
    <scope>X-RAY CRYSTALLOGRAPHY (2.2 ANGSTROMS)</scope>
</reference>
<name>MEMB_METCA</name>
<keyword id="KW-0002">3D-structure</keyword>
<keyword id="KW-0903">Direct protein sequencing</keyword>
<keyword id="KW-0503">Monooxygenase</keyword>
<keyword id="KW-0521">NADP</keyword>
<keyword id="KW-0554">One-carbon metabolism</keyword>
<keyword id="KW-0560">Oxidoreductase</keyword>
<keyword id="KW-1185">Reference proteome</keyword>
<accession>P18798</accession>
<accession>Q609N7</accession>